<name>SUCC_BURA4</name>
<accession>B1YVY6</accession>
<sequence length="388" mass="41266">MKIHEYQGKEILRKFGVAVPRGKPAFSVDEAVKVAEELGGPVWVVKAQIHAGGRGKGGGVKVAKSIEQVREYANQILGMQLVTHQTGPEGQKVNRLMIEEGADIKQELYVSLVVDRISQKIVLMGSSEGGMDIEEVAEKHPELIHKVIVEPSTGLLDAQADDLAAKIGVPAASIPQARAILQGLYKAFWETDASLAEINPLNVSGDGKVIALDAKFNFDSNALFRHPEIVAYRDLDEEDPAEIEASKFDLAYISLDGNIGCLVNGAGLAMATMDTIKLFGGEPANFLDVGGGATTEKVTEAFKLMLKNPDLKAILVNIFGGIMRCDVIAEGVIAGSKAVNLNVPLVVRMKGTNEDLGKKMLADSGLPIISADSMEEAAQKVVAAAAGK</sequence>
<proteinExistence type="inferred from homology"/>
<dbReference type="EC" id="6.2.1.5" evidence="1"/>
<dbReference type="EMBL" id="CP001025">
    <property type="protein sequence ID" value="ACB65047.1"/>
    <property type="molecule type" value="Genomic_DNA"/>
</dbReference>
<dbReference type="RefSeq" id="WP_006755512.1">
    <property type="nucleotide sequence ID" value="NC_010551.1"/>
</dbReference>
<dbReference type="SMR" id="B1YVY6"/>
<dbReference type="GeneID" id="93194304"/>
<dbReference type="KEGG" id="bac:BamMC406_2570"/>
<dbReference type="HOGENOM" id="CLU_037430_0_2_4"/>
<dbReference type="OrthoDB" id="9802602at2"/>
<dbReference type="UniPathway" id="UPA00223">
    <property type="reaction ID" value="UER00999"/>
</dbReference>
<dbReference type="Proteomes" id="UP000001680">
    <property type="component" value="Chromosome 1"/>
</dbReference>
<dbReference type="GO" id="GO:0005829">
    <property type="term" value="C:cytosol"/>
    <property type="evidence" value="ECO:0007669"/>
    <property type="project" value="TreeGrafter"/>
</dbReference>
<dbReference type="GO" id="GO:0042709">
    <property type="term" value="C:succinate-CoA ligase complex"/>
    <property type="evidence" value="ECO:0007669"/>
    <property type="project" value="TreeGrafter"/>
</dbReference>
<dbReference type="GO" id="GO:0005524">
    <property type="term" value="F:ATP binding"/>
    <property type="evidence" value="ECO:0007669"/>
    <property type="project" value="UniProtKB-UniRule"/>
</dbReference>
<dbReference type="GO" id="GO:0000287">
    <property type="term" value="F:magnesium ion binding"/>
    <property type="evidence" value="ECO:0007669"/>
    <property type="project" value="UniProtKB-UniRule"/>
</dbReference>
<dbReference type="GO" id="GO:0004775">
    <property type="term" value="F:succinate-CoA ligase (ADP-forming) activity"/>
    <property type="evidence" value="ECO:0007669"/>
    <property type="project" value="UniProtKB-UniRule"/>
</dbReference>
<dbReference type="GO" id="GO:0004776">
    <property type="term" value="F:succinate-CoA ligase (GDP-forming) activity"/>
    <property type="evidence" value="ECO:0007669"/>
    <property type="project" value="RHEA"/>
</dbReference>
<dbReference type="GO" id="GO:0006104">
    <property type="term" value="P:succinyl-CoA metabolic process"/>
    <property type="evidence" value="ECO:0007669"/>
    <property type="project" value="TreeGrafter"/>
</dbReference>
<dbReference type="GO" id="GO:0006099">
    <property type="term" value="P:tricarboxylic acid cycle"/>
    <property type="evidence" value="ECO:0007669"/>
    <property type="project" value="UniProtKB-UniRule"/>
</dbReference>
<dbReference type="FunFam" id="3.30.1490.20:FF:000002">
    <property type="entry name" value="Succinate--CoA ligase [ADP-forming] subunit beta"/>
    <property type="match status" value="1"/>
</dbReference>
<dbReference type="FunFam" id="3.30.470.20:FF:000002">
    <property type="entry name" value="Succinate--CoA ligase [ADP-forming] subunit beta"/>
    <property type="match status" value="1"/>
</dbReference>
<dbReference type="FunFam" id="3.40.50.261:FF:000001">
    <property type="entry name" value="Succinate--CoA ligase [ADP-forming] subunit beta"/>
    <property type="match status" value="1"/>
</dbReference>
<dbReference type="Gene3D" id="3.30.1490.20">
    <property type="entry name" value="ATP-grasp fold, A domain"/>
    <property type="match status" value="1"/>
</dbReference>
<dbReference type="Gene3D" id="3.30.470.20">
    <property type="entry name" value="ATP-grasp fold, B domain"/>
    <property type="match status" value="1"/>
</dbReference>
<dbReference type="Gene3D" id="3.40.50.261">
    <property type="entry name" value="Succinyl-CoA synthetase domains"/>
    <property type="match status" value="1"/>
</dbReference>
<dbReference type="HAMAP" id="MF_00558">
    <property type="entry name" value="Succ_CoA_beta"/>
    <property type="match status" value="1"/>
</dbReference>
<dbReference type="InterPro" id="IPR011761">
    <property type="entry name" value="ATP-grasp"/>
</dbReference>
<dbReference type="InterPro" id="IPR013650">
    <property type="entry name" value="ATP-grasp_succ-CoA_synth-type"/>
</dbReference>
<dbReference type="InterPro" id="IPR013815">
    <property type="entry name" value="ATP_grasp_subdomain_1"/>
</dbReference>
<dbReference type="InterPro" id="IPR017866">
    <property type="entry name" value="Succ-CoA_synthase_bsu_CS"/>
</dbReference>
<dbReference type="InterPro" id="IPR005811">
    <property type="entry name" value="SUCC_ACL_C"/>
</dbReference>
<dbReference type="InterPro" id="IPR005809">
    <property type="entry name" value="Succ_CoA_ligase-like_bsu"/>
</dbReference>
<dbReference type="InterPro" id="IPR016102">
    <property type="entry name" value="Succinyl-CoA_synth-like"/>
</dbReference>
<dbReference type="NCBIfam" id="NF001913">
    <property type="entry name" value="PRK00696.1"/>
    <property type="match status" value="1"/>
</dbReference>
<dbReference type="NCBIfam" id="TIGR01016">
    <property type="entry name" value="sucCoAbeta"/>
    <property type="match status" value="1"/>
</dbReference>
<dbReference type="PANTHER" id="PTHR11815:SF10">
    <property type="entry name" value="SUCCINATE--COA LIGASE [GDP-FORMING] SUBUNIT BETA, MITOCHONDRIAL"/>
    <property type="match status" value="1"/>
</dbReference>
<dbReference type="PANTHER" id="PTHR11815">
    <property type="entry name" value="SUCCINYL-COA SYNTHETASE BETA CHAIN"/>
    <property type="match status" value="1"/>
</dbReference>
<dbReference type="Pfam" id="PF08442">
    <property type="entry name" value="ATP-grasp_2"/>
    <property type="match status" value="1"/>
</dbReference>
<dbReference type="Pfam" id="PF00549">
    <property type="entry name" value="Ligase_CoA"/>
    <property type="match status" value="1"/>
</dbReference>
<dbReference type="PIRSF" id="PIRSF001554">
    <property type="entry name" value="SucCS_beta"/>
    <property type="match status" value="1"/>
</dbReference>
<dbReference type="SUPFAM" id="SSF56059">
    <property type="entry name" value="Glutathione synthetase ATP-binding domain-like"/>
    <property type="match status" value="1"/>
</dbReference>
<dbReference type="SUPFAM" id="SSF52210">
    <property type="entry name" value="Succinyl-CoA synthetase domains"/>
    <property type="match status" value="1"/>
</dbReference>
<dbReference type="PROSITE" id="PS50975">
    <property type="entry name" value="ATP_GRASP"/>
    <property type="match status" value="1"/>
</dbReference>
<dbReference type="PROSITE" id="PS01217">
    <property type="entry name" value="SUCCINYL_COA_LIG_3"/>
    <property type="match status" value="1"/>
</dbReference>
<gene>
    <name evidence="1" type="primary">sucC</name>
    <name type="ordered locus">BamMC406_2570</name>
</gene>
<evidence type="ECO:0000255" key="1">
    <source>
        <dbReference type="HAMAP-Rule" id="MF_00558"/>
    </source>
</evidence>
<keyword id="KW-0067">ATP-binding</keyword>
<keyword id="KW-0436">Ligase</keyword>
<keyword id="KW-0460">Magnesium</keyword>
<keyword id="KW-0479">Metal-binding</keyword>
<keyword id="KW-0547">Nucleotide-binding</keyword>
<keyword id="KW-0816">Tricarboxylic acid cycle</keyword>
<protein>
    <recommendedName>
        <fullName evidence="1">Succinate--CoA ligase [ADP-forming] subunit beta</fullName>
        <ecNumber evidence="1">6.2.1.5</ecNumber>
    </recommendedName>
    <alternativeName>
        <fullName evidence="1">Succinyl-CoA synthetase subunit beta</fullName>
        <shortName evidence="1">SCS-beta</shortName>
    </alternativeName>
</protein>
<organism>
    <name type="scientific">Burkholderia ambifaria (strain MC40-6)</name>
    <dbReference type="NCBI Taxonomy" id="398577"/>
    <lineage>
        <taxon>Bacteria</taxon>
        <taxon>Pseudomonadati</taxon>
        <taxon>Pseudomonadota</taxon>
        <taxon>Betaproteobacteria</taxon>
        <taxon>Burkholderiales</taxon>
        <taxon>Burkholderiaceae</taxon>
        <taxon>Burkholderia</taxon>
        <taxon>Burkholderia cepacia complex</taxon>
    </lineage>
</organism>
<feature type="chain" id="PRO_1000129165" description="Succinate--CoA ligase [ADP-forming] subunit beta">
    <location>
        <begin position="1"/>
        <end position="388"/>
    </location>
</feature>
<feature type="domain" description="ATP-grasp" evidence="1">
    <location>
        <begin position="9"/>
        <end position="244"/>
    </location>
</feature>
<feature type="binding site" evidence="1">
    <location>
        <position position="46"/>
    </location>
    <ligand>
        <name>ATP</name>
        <dbReference type="ChEBI" id="CHEBI:30616"/>
    </ligand>
</feature>
<feature type="binding site" evidence="1">
    <location>
        <begin position="53"/>
        <end position="55"/>
    </location>
    <ligand>
        <name>ATP</name>
        <dbReference type="ChEBI" id="CHEBI:30616"/>
    </ligand>
</feature>
<feature type="binding site" evidence="1">
    <location>
        <position position="99"/>
    </location>
    <ligand>
        <name>ATP</name>
        <dbReference type="ChEBI" id="CHEBI:30616"/>
    </ligand>
</feature>
<feature type="binding site" evidence="1">
    <location>
        <position position="102"/>
    </location>
    <ligand>
        <name>ATP</name>
        <dbReference type="ChEBI" id="CHEBI:30616"/>
    </ligand>
</feature>
<feature type="binding site" evidence="1">
    <location>
        <position position="107"/>
    </location>
    <ligand>
        <name>ATP</name>
        <dbReference type="ChEBI" id="CHEBI:30616"/>
    </ligand>
</feature>
<feature type="binding site" evidence="1">
    <location>
        <position position="199"/>
    </location>
    <ligand>
        <name>Mg(2+)</name>
        <dbReference type="ChEBI" id="CHEBI:18420"/>
    </ligand>
</feature>
<feature type="binding site" evidence="1">
    <location>
        <position position="213"/>
    </location>
    <ligand>
        <name>Mg(2+)</name>
        <dbReference type="ChEBI" id="CHEBI:18420"/>
    </ligand>
</feature>
<feature type="binding site" evidence="1">
    <location>
        <position position="264"/>
    </location>
    <ligand>
        <name>substrate</name>
        <note>ligand shared with subunit alpha</note>
    </ligand>
</feature>
<feature type="binding site" evidence="1">
    <location>
        <begin position="321"/>
        <end position="323"/>
    </location>
    <ligand>
        <name>substrate</name>
        <note>ligand shared with subunit alpha</note>
    </ligand>
</feature>
<reference key="1">
    <citation type="submission" date="2008-04" db="EMBL/GenBank/DDBJ databases">
        <title>Complete sequence of chromosome 1 of Burkholderia ambifaria MC40-6.</title>
        <authorList>
            <person name="Copeland A."/>
            <person name="Lucas S."/>
            <person name="Lapidus A."/>
            <person name="Glavina del Rio T."/>
            <person name="Dalin E."/>
            <person name="Tice H."/>
            <person name="Pitluck S."/>
            <person name="Chain P."/>
            <person name="Malfatti S."/>
            <person name="Shin M."/>
            <person name="Vergez L."/>
            <person name="Lang D."/>
            <person name="Schmutz J."/>
            <person name="Larimer F."/>
            <person name="Land M."/>
            <person name="Hauser L."/>
            <person name="Kyrpides N."/>
            <person name="Lykidis A."/>
            <person name="Ramette A."/>
            <person name="Konstantinidis K."/>
            <person name="Tiedje J."/>
            <person name="Richardson P."/>
        </authorList>
    </citation>
    <scope>NUCLEOTIDE SEQUENCE [LARGE SCALE GENOMIC DNA]</scope>
    <source>
        <strain>MC40-6</strain>
    </source>
</reference>
<comment type="function">
    <text evidence="1">Succinyl-CoA synthetase functions in the citric acid cycle (TCA), coupling the hydrolysis of succinyl-CoA to the synthesis of either ATP or GTP and thus represents the only step of substrate-level phosphorylation in the TCA. The beta subunit provides nucleotide specificity of the enzyme and binds the substrate succinate, while the binding sites for coenzyme A and phosphate are found in the alpha subunit.</text>
</comment>
<comment type="catalytic activity">
    <reaction evidence="1">
        <text>succinate + ATP + CoA = succinyl-CoA + ADP + phosphate</text>
        <dbReference type="Rhea" id="RHEA:17661"/>
        <dbReference type="ChEBI" id="CHEBI:30031"/>
        <dbReference type="ChEBI" id="CHEBI:30616"/>
        <dbReference type="ChEBI" id="CHEBI:43474"/>
        <dbReference type="ChEBI" id="CHEBI:57287"/>
        <dbReference type="ChEBI" id="CHEBI:57292"/>
        <dbReference type="ChEBI" id="CHEBI:456216"/>
        <dbReference type="EC" id="6.2.1.5"/>
    </reaction>
    <physiologicalReaction direction="right-to-left" evidence="1">
        <dbReference type="Rhea" id="RHEA:17663"/>
    </physiologicalReaction>
</comment>
<comment type="catalytic activity">
    <reaction evidence="1">
        <text>GTP + succinate + CoA = succinyl-CoA + GDP + phosphate</text>
        <dbReference type="Rhea" id="RHEA:22120"/>
        <dbReference type="ChEBI" id="CHEBI:30031"/>
        <dbReference type="ChEBI" id="CHEBI:37565"/>
        <dbReference type="ChEBI" id="CHEBI:43474"/>
        <dbReference type="ChEBI" id="CHEBI:57287"/>
        <dbReference type="ChEBI" id="CHEBI:57292"/>
        <dbReference type="ChEBI" id="CHEBI:58189"/>
    </reaction>
    <physiologicalReaction direction="right-to-left" evidence="1">
        <dbReference type="Rhea" id="RHEA:22122"/>
    </physiologicalReaction>
</comment>
<comment type="cofactor">
    <cofactor evidence="1">
        <name>Mg(2+)</name>
        <dbReference type="ChEBI" id="CHEBI:18420"/>
    </cofactor>
    <text evidence="1">Binds 1 Mg(2+) ion per subunit.</text>
</comment>
<comment type="pathway">
    <text evidence="1">Carbohydrate metabolism; tricarboxylic acid cycle; succinate from succinyl-CoA (ligase route): step 1/1.</text>
</comment>
<comment type="subunit">
    <text evidence="1">Heterotetramer of two alpha and two beta subunits.</text>
</comment>
<comment type="similarity">
    <text evidence="1">Belongs to the succinate/malate CoA ligase beta subunit family.</text>
</comment>